<evidence type="ECO:0000250" key="1"/>
<evidence type="ECO:0000255" key="2"/>
<evidence type="ECO:0000269" key="3">
    <source>
    </source>
</evidence>
<evidence type="ECO:0000305" key="4"/>
<keyword id="KW-0963">Cytoplasm</keyword>
<keyword id="KW-0456">Lyase</keyword>
<keyword id="KW-0511">Multifunctional enzyme</keyword>
<keyword id="KW-0520">NAD</keyword>
<keyword id="KW-0539">Nucleus</keyword>
<keyword id="KW-0560">Oxidoreductase</keyword>
<keyword id="KW-0627">Porphyrin biosynthesis</keyword>
<keyword id="KW-1185">Reference proteome</keyword>
<accession>O14172</accession>
<proteinExistence type="inferred from homology"/>
<comment type="function">
    <text evidence="1">Catalyzes the conversion of precorrin-2 into siroheme. This reaction consist of the NAD-dependent oxidation of precorrin-2 into sirohydrochlorin and its subsequent ferrochelation into siroheme (By similarity).</text>
</comment>
<comment type="catalytic activity">
    <reaction>
        <text>precorrin-2 + NAD(+) = sirohydrochlorin + NADH + 2 H(+)</text>
        <dbReference type="Rhea" id="RHEA:15613"/>
        <dbReference type="ChEBI" id="CHEBI:15378"/>
        <dbReference type="ChEBI" id="CHEBI:57540"/>
        <dbReference type="ChEBI" id="CHEBI:57945"/>
        <dbReference type="ChEBI" id="CHEBI:58351"/>
        <dbReference type="ChEBI" id="CHEBI:58827"/>
        <dbReference type="EC" id="1.3.1.76"/>
    </reaction>
</comment>
<comment type="catalytic activity">
    <reaction>
        <text>siroheme + 2 H(+) = sirohydrochlorin + Fe(2+)</text>
        <dbReference type="Rhea" id="RHEA:24360"/>
        <dbReference type="ChEBI" id="CHEBI:15378"/>
        <dbReference type="ChEBI" id="CHEBI:29033"/>
        <dbReference type="ChEBI" id="CHEBI:58351"/>
        <dbReference type="ChEBI" id="CHEBI:60052"/>
        <dbReference type="EC" id="4.99.1.4"/>
    </reaction>
</comment>
<comment type="pathway">
    <text>Porphyrin-containing compound metabolism; siroheme biosynthesis; siroheme from sirohydrochlorin: step 1/1.</text>
</comment>
<comment type="pathway">
    <text>Porphyrin-containing compound metabolism; siroheme biosynthesis; sirohydrochlorin from precorrin-2: step 1/1.</text>
</comment>
<comment type="subcellular location">
    <subcellularLocation>
        <location evidence="3">Cytoplasm</location>
    </subcellularLocation>
    <subcellularLocation>
        <location evidence="3">Nucleus</location>
    </subcellularLocation>
</comment>
<comment type="similarity">
    <text evidence="4">Belongs to the precorrin-2 dehydrogenase / sirohydrochlorin ferrochelatase family. MET8 subfamily.</text>
</comment>
<reference key="1">
    <citation type="journal article" date="2002" name="Nature">
        <title>The genome sequence of Schizosaccharomyces pombe.</title>
        <authorList>
            <person name="Wood V."/>
            <person name="Gwilliam R."/>
            <person name="Rajandream M.A."/>
            <person name="Lyne M.H."/>
            <person name="Lyne R."/>
            <person name="Stewart A."/>
            <person name="Sgouros J.G."/>
            <person name="Peat N."/>
            <person name="Hayles J."/>
            <person name="Baker S.G."/>
            <person name="Basham D."/>
            <person name="Bowman S."/>
            <person name="Brooks K."/>
            <person name="Brown D."/>
            <person name="Brown S."/>
            <person name="Chillingworth T."/>
            <person name="Churcher C.M."/>
            <person name="Collins M."/>
            <person name="Connor R."/>
            <person name="Cronin A."/>
            <person name="Davis P."/>
            <person name="Feltwell T."/>
            <person name="Fraser A."/>
            <person name="Gentles S."/>
            <person name="Goble A."/>
            <person name="Hamlin N."/>
            <person name="Harris D.E."/>
            <person name="Hidalgo J."/>
            <person name="Hodgson G."/>
            <person name="Holroyd S."/>
            <person name="Hornsby T."/>
            <person name="Howarth S."/>
            <person name="Huckle E.J."/>
            <person name="Hunt S."/>
            <person name="Jagels K."/>
            <person name="James K.D."/>
            <person name="Jones L."/>
            <person name="Jones M."/>
            <person name="Leather S."/>
            <person name="McDonald S."/>
            <person name="McLean J."/>
            <person name="Mooney P."/>
            <person name="Moule S."/>
            <person name="Mungall K.L."/>
            <person name="Murphy L.D."/>
            <person name="Niblett D."/>
            <person name="Odell C."/>
            <person name="Oliver K."/>
            <person name="O'Neil S."/>
            <person name="Pearson D."/>
            <person name="Quail M.A."/>
            <person name="Rabbinowitsch E."/>
            <person name="Rutherford K.M."/>
            <person name="Rutter S."/>
            <person name="Saunders D."/>
            <person name="Seeger K."/>
            <person name="Sharp S."/>
            <person name="Skelton J."/>
            <person name="Simmonds M.N."/>
            <person name="Squares R."/>
            <person name="Squares S."/>
            <person name="Stevens K."/>
            <person name="Taylor K."/>
            <person name="Taylor R.G."/>
            <person name="Tivey A."/>
            <person name="Walsh S.V."/>
            <person name="Warren T."/>
            <person name="Whitehead S."/>
            <person name="Woodward J.R."/>
            <person name="Volckaert G."/>
            <person name="Aert R."/>
            <person name="Robben J."/>
            <person name="Grymonprez B."/>
            <person name="Weltjens I."/>
            <person name="Vanstreels E."/>
            <person name="Rieger M."/>
            <person name="Schaefer M."/>
            <person name="Mueller-Auer S."/>
            <person name="Gabel C."/>
            <person name="Fuchs M."/>
            <person name="Duesterhoeft A."/>
            <person name="Fritzc C."/>
            <person name="Holzer E."/>
            <person name="Moestl D."/>
            <person name="Hilbert H."/>
            <person name="Borzym K."/>
            <person name="Langer I."/>
            <person name="Beck A."/>
            <person name="Lehrach H."/>
            <person name="Reinhardt R."/>
            <person name="Pohl T.M."/>
            <person name="Eger P."/>
            <person name="Zimmermann W."/>
            <person name="Wedler H."/>
            <person name="Wambutt R."/>
            <person name="Purnelle B."/>
            <person name="Goffeau A."/>
            <person name="Cadieu E."/>
            <person name="Dreano S."/>
            <person name="Gloux S."/>
            <person name="Lelaure V."/>
            <person name="Mottier S."/>
            <person name="Galibert F."/>
            <person name="Aves S.J."/>
            <person name="Xiang Z."/>
            <person name="Hunt C."/>
            <person name="Moore K."/>
            <person name="Hurst S.M."/>
            <person name="Lucas M."/>
            <person name="Rochet M."/>
            <person name="Gaillardin C."/>
            <person name="Tallada V.A."/>
            <person name="Garzon A."/>
            <person name="Thode G."/>
            <person name="Daga R.R."/>
            <person name="Cruzado L."/>
            <person name="Jimenez J."/>
            <person name="Sanchez M."/>
            <person name="del Rey F."/>
            <person name="Benito J."/>
            <person name="Dominguez A."/>
            <person name="Revuelta J.L."/>
            <person name="Moreno S."/>
            <person name="Armstrong J."/>
            <person name="Forsburg S.L."/>
            <person name="Cerutti L."/>
            <person name="Lowe T."/>
            <person name="McCombie W.R."/>
            <person name="Paulsen I."/>
            <person name="Potashkin J."/>
            <person name="Shpakovski G.V."/>
            <person name="Ussery D."/>
            <person name="Barrell B.G."/>
            <person name="Nurse P."/>
        </authorList>
    </citation>
    <scope>NUCLEOTIDE SEQUENCE [LARGE SCALE GENOMIC DNA]</scope>
    <source>
        <strain>972 / ATCC 24843</strain>
    </source>
</reference>
<reference key="2">
    <citation type="journal article" date="2006" name="Nat. Biotechnol.">
        <title>ORFeome cloning and global analysis of protein localization in the fission yeast Schizosaccharomyces pombe.</title>
        <authorList>
            <person name="Matsuyama A."/>
            <person name="Arai R."/>
            <person name="Yashiroda Y."/>
            <person name="Shirai A."/>
            <person name="Kamata A."/>
            <person name="Sekido S."/>
            <person name="Kobayashi Y."/>
            <person name="Hashimoto A."/>
            <person name="Hamamoto M."/>
            <person name="Hiraoka Y."/>
            <person name="Horinouchi S."/>
            <person name="Yoshida M."/>
        </authorList>
    </citation>
    <scope>SUBCELLULAR LOCATION [LARGE SCALE ANALYSIS]</scope>
</reference>
<name>MET8_SCHPO</name>
<sequence>MASKYQSVQPGGSLIIAWRAQGKKVLIVGGGVVAAGRILHVLNADAHVIVVSPKAGLCKEVAWRIQEKQVEWRDRGFLVEDLSDDVNMVLTAIDDPSLSSEIYKLCKSKKIPVNAADIPPECDFYFGSEIRNGPLQIMVSTNGKGPKLASLIRKKIESSINPATGMALEKTGLLRQKLRDIVPEPENSRKRMRWMIEICELWSLEELAMLDENLINRLLGYFPKKTPSYREITTPAYSKIDNYIWFGAIIISGAVLLKHVSKAR</sequence>
<organism>
    <name type="scientific">Schizosaccharomyces pombe (strain 972 / ATCC 24843)</name>
    <name type="common">Fission yeast</name>
    <dbReference type="NCBI Taxonomy" id="284812"/>
    <lineage>
        <taxon>Eukaryota</taxon>
        <taxon>Fungi</taxon>
        <taxon>Dikarya</taxon>
        <taxon>Ascomycota</taxon>
        <taxon>Taphrinomycotina</taxon>
        <taxon>Schizosaccharomycetes</taxon>
        <taxon>Schizosaccharomycetales</taxon>
        <taxon>Schizosaccharomycetaceae</taxon>
        <taxon>Schizosaccharomyces</taxon>
    </lineage>
</organism>
<feature type="chain" id="PRO_0000346781" description="Siroheme biosynthesis protein met8">
    <location>
        <begin position="1"/>
        <end position="264"/>
    </location>
</feature>
<feature type="active site" description="Proton acceptor" evidence="2">
    <location>
        <position position="117"/>
    </location>
</feature>
<feature type="binding site" evidence="1">
    <location>
        <begin position="32"/>
        <end position="33"/>
    </location>
    <ligand>
        <name>NAD(+)</name>
        <dbReference type="ChEBI" id="CHEBI:57540"/>
    </ligand>
</feature>
<feature type="binding site" evidence="1">
    <location>
        <begin position="53"/>
        <end position="56"/>
    </location>
    <ligand>
        <name>NAD(+)</name>
        <dbReference type="ChEBI" id="CHEBI:57540"/>
    </ligand>
</feature>
<gene>
    <name type="primary">met8</name>
    <name type="ORF">SPAC4D7.06c</name>
</gene>
<dbReference type="EC" id="1.3.1.76"/>
<dbReference type="EC" id="4.99.1.4"/>
<dbReference type="EMBL" id="CU329670">
    <property type="protein sequence ID" value="CAB11278.1"/>
    <property type="molecule type" value="Genomic_DNA"/>
</dbReference>
<dbReference type="PIR" id="T38797">
    <property type="entry name" value="T38797"/>
</dbReference>
<dbReference type="RefSeq" id="NP_594959.1">
    <property type="nucleotide sequence ID" value="NM_001020390.2"/>
</dbReference>
<dbReference type="SMR" id="O14172"/>
<dbReference type="BioGRID" id="280038">
    <property type="interactions" value="29"/>
</dbReference>
<dbReference type="FunCoup" id="O14172">
    <property type="interactions" value="128"/>
</dbReference>
<dbReference type="STRING" id="284812.O14172"/>
<dbReference type="iPTMnet" id="O14172"/>
<dbReference type="PaxDb" id="4896-SPAC4D7.06c.1"/>
<dbReference type="EnsemblFungi" id="SPAC4D7.06c.1">
    <property type="protein sequence ID" value="SPAC4D7.06c.1:pep"/>
    <property type="gene ID" value="SPAC4D7.06c"/>
</dbReference>
<dbReference type="GeneID" id="2543624"/>
<dbReference type="KEGG" id="spo:2543624"/>
<dbReference type="PomBase" id="SPAC4D7.06c">
    <property type="gene designation" value="met8"/>
</dbReference>
<dbReference type="VEuPathDB" id="FungiDB:SPAC4D7.06c"/>
<dbReference type="eggNOG" id="ENOG502RYIW">
    <property type="taxonomic scope" value="Eukaryota"/>
</dbReference>
<dbReference type="HOGENOM" id="CLU_011276_8_5_1"/>
<dbReference type="InParanoid" id="O14172"/>
<dbReference type="OMA" id="TQIWKLC"/>
<dbReference type="PhylomeDB" id="O14172"/>
<dbReference type="UniPathway" id="UPA00262">
    <property type="reaction ID" value="UER00222"/>
</dbReference>
<dbReference type="UniPathway" id="UPA00262">
    <property type="reaction ID" value="UER00376"/>
</dbReference>
<dbReference type="PRO" id="PR:O14172"/>
<dbReference type="Proteomes" id="UP000002485">
    <property type="component" value="Chromosome I"/>
</dbReference>
<dbReference type="GO" id="GO:0005829">
    <property type="term" value="C:cytosol"/>
    <property type="evidence" value="ECO:0007005"/>
    <property type="project" value="PomBase"/>
</dbReference>
<dbReference type="GO" id="GO:0005634">
    <property type="term" value="C:nucleus"/>
    <property type="evidence" value="ECO:0007005"/>
    <property type="project" value="PomBase"/>
</dbReference>
<dbReference type="GO" id="GO:0043115">
    <property type="term" value="F:precorrin-2 dehydrogenase activity"/>
    <property type="evidence" value="ECO:0000318"/>
    <property type="project" value="GO_Central"/>
</dbReference>
<dbReference type="GO" id="GO:0051266">
    <property type="term" value="F:sirohydrochlorin ferrochelatase activity"/>
    <property type="evidence" value="ECO:0007669"/>
    <property type="project" value="UniProtKB-EC"/>
</dbReference>
<dbReference type="GO" id="GO:0019354">
    <property type="term" value="P:siroheme biosynthetic process"/>
    <property type="evidence" value="ECO:0000318"/>
    <property type="project" value="GO_Central"/>
</dbReference>
<dbReference type="GO" id="GO:0000103">
    <property type="term" value="P:sulfate assimilation"/>
    <property type="evidence" value="ECO:0000266"/>
    <property type="project" value="PomBase"/>
</dbReference>
<dbReference type="Gene3D" id="3.40.50.720">
    <property type="entry name" value="NAD(P)-binding Rossmann-like Domain"/>
    <property type="match status" value="2"/>
</dbReference>
<dbReference type="Gene3D" id="3.30.160.110">
    <property type="entry name" value="Siroheme synthase, domain 2"/>
    <property type="match status" value="1"/>
</dbReference>
<dbReference type="Gene3D" id="1.10.3280.10">
    <property type="entry name" value="Siroheme synthase, domain 3"/>
    <property type="match status" value="1"/>
</dbReference>
<dbReference type="InterPro" id="IPR028161">
    <property type="entry name" value="Met8-like"/>
</dbReference>
<dbReference type="InterPro" id="IPR028162">
    <property type="entry name" value="Met8_C"/>
</dbReference>
<dbReference type="InterPro" id="IPR036291">
    <property type="entry name" value="NAD(P)-bd_dom_sf"/>
</dbReference>
<dbReference type="InterPro" id="IPR028281">
    <property type="entry name" value="Sirohaem_synthase_central"/>
</dbReference>
<dbReference type="InterPro" id="IPR006367">
    <property type="entry name" value="Sirohaem_synthase_N"/>
</dbReference>
<dbReference type="NCBIfam" id="TIGR01470">
    <property type="entry name" value="cysG_Nterm"/>
    <property type="match status" value="1"/>
</dbReference>
<dbReference type="PANTHER" id="PTHR35330">
    <property type="entry name" value="SIROHEME BIOSYNTHESIS PROTEIN MET8"/>
    <property type="match status" value="1"/>
</dbReference>
<dbReference type="PANTHER" id="PTHR35330:SF1">
    <property type="entry name" value="SIROHEME BIOSYNTHESIS PROTEIN MET8"/>
    <property type="match status" value="1"/>
</dbReference>
<dbReference type="Pfam" id="PF13241">
    <property type="entry name" value="NAD_binding_7"/>
    <property type="match status" value="1"/>
</dbReference>
<dbReference type="Pfam" id="PF14823">
    <property type="entry name" value="Sirohm_synth_C"/>
    <property type="match status" value="1"/>
</dbReference>
<dbReference type="Pfam" id="PF14824">
    <property type="entry name" value="Sirohm_synth_M"/>
    <property type="match status" value="1"/>
</dbReference>
<dbReference type="SUPFAM" id="SSF51735">
    <property type="entry name" value="NAD(P)-binding Rossmann-fold domains"/>
    <property type="match status" value="1"/>
</dbReference>
<dbReference type="SUPFAM" id="SSF75615">
    <property type="entry name" value="Siroheme synthase middle domains-like"/>
    <property type="match status" value="1"/>
</dbReference>
<protein>
    <recommendedName>
        <fullName>Siroheme biosynthesis protein met8</fullName>
    </recommendedName>
    <domain>
        <recommendedName>
            <fullName>Precorrin-2 dehydrogenase</fullName>
            <ecNumber>1.3.1.76</ecNumber>
        </recommendedName>
    </domain>
    <domain>
        <recommendedName>
            <fullName>Sirohydrochlorin ferrochelatase</fullName>
            <ecNumber>4.99.1.4</ecNumber>
        </recommendedName>
    </domain>
</protein>